<accession>Q5N3P4</accession>
<feature type="chain" id="PRO_0000133991" description="Enolase">
    <location>
        <begin position="1"/>
        <end position="430"/>
    </location>
</feature>
<feature type="active site" description="Proton donor" evidence="1">
    <location>
        <position position="209"/>
    </location>
</feature>
<feature type="active site" description="Proton acceptor" evidence="1">
    <location>
        <position position="339"/>
    </location>
</feature>
<feature type="binding site" evidence="1">
    <location>
        <position position="167"/>
    </location>
    <ligand>
        <name>(2R)-2-phosphoglycerate</name>
        <dbReference type="ChEBI" id="CHEBI:58289"/>
    </ligand>
</feature>
<feature type="binding site" evidence="1">
    <location>
        <position position="246"/>
    </location>
    <ligand>
        <name>Mg(2+)</name>
        <dbReference type="ChEBI" id="CHEBI:18420"/>
    </ligand>
</feature>
<feature type="binding site" evidence="1">
    <location>
        <position position="287"/>
    </location>
    <ligand>
        <name>Mg(2+)</name>
        <dbReference type="ChEBI" id="CHEBI:18420"/>
    </ligand>
</feature>
<feature type="binding site" evidence="1">
    <location>
        <position position="314"/>
    </location>
    <ligand>
        <name>Mg(2+)</name>
        <dbReference type="ChEBI" id="CHEBI:18420"/>
    </ligand>
</feature>
<feature type="binding site" evidence="1">
    <location>
        <position position="339"/>
    </location>
    <ligand>
        <name>(2R)-2-phosphoglycerate</name>
        <dbReference type="ChEBI" id="CHEBI:58289"/>
    </ligand>
</feature>
<feature type="binding site" evidence="1">
    <location>
        <position position="368"/>
    </location>
    <ligand>
        <name>(2R)-2-phosphoglycerate</name>
        <dbReference type="ChEBI" id="CHEBI:58289"/>
    </ligand>
</feature>
<feature type="binding site" evidence="1">
    <location>
        <position position="369"/>
    </location>
    <ligand>
        <name>(2R)-2-phosphoglycerate</name>
        <dbReference type="ChEBI" id="CHEBI:58289"/>
    </ligand>
</feature>
<name>ENO_SYNP6</name>
<proteinExistence type="inferred from homology"/>
<reference key="1">
    <citation type="journal article" date="2007" name="Photosyn. Res.">
        <title>Complete nucleotide sequence of the freshwater unicellular cyanobacterium Synechococcus elongatus PCC 6301 chromosome: gene content and organization.</title>
        <authorList>
            <person name="Sugita C."/>
            <person name="Ogata K."/>
            <person name="Shikata M."/>
            <person name="Jikuya H."/>
            <person name="Takano J."/>
            <person name="Furumichi M."/>
            <person name="Kanehisa M."/>
            <person name="Omata T."/>
            <person name="Sugiura M."/>
            <person name="Sugita M."/>
        </authorList>
    </citation>
    <scope>NUCLEOTIDE SEQUENCE [LARGE SCALE GENOMIC DNA]</scope>
    <source>
        <strain>ATCC 27144 / PCC 6301 / SAUG 1402/1</strain>
    </source>
</reference>
<comment type="function">
    <text evidence="1">Catalyzes the reversible conversion of 2-phosphoglycerate (2-PG) into phosphoenolpyruvate (PEP). It is essential for the degradation of carbohydrates via glycolysis.</text>
</comment>
<comment type="catalytic activity">
    <reaction evidence="1">
        <text>(2R)-2-phosphoglycerate = phosphoenolpyruvate + H2O</text>
        <dbReference type="Rhea" id="RHEA:10164"/>
        <dbReference type="ChEBI" id="CHEBI:15377"/>
        <dbReference type="ChEBI" id="CHEBI:58289"/>
        <dbReference type="ChEBI" id="CHEBI:58702"/>
        <dbReference type="EC" id="4.2.1.11"/>
    </reaction>
</comment>
<comment type="cofactor">
    <cofactor evidence="1">
        <name>Mg(2+)</name>
        <dbReference type="ChEBI" id="CHEBI:18420"/>
    </cofactor>
    <text evidence="1">Binds a second Mg(2+) ion via substrate during catalysis.</text>
</comment>
<comment type="pathway">
    <text evidence="1">Carbohydrate degradation; glycolysis; pyruvate from D-glyceraldehyde 3-phosphate: step 4/5.</text>
</comment>
<comment type="subcellular location">
    <subcellularLocation>
        <location evidence="1">Cytoplasm</location>
    </subcellularLocation>
    <subcellularLocation>
        <location evidence="1">Secreted</location>
    </subcellularLocation>
    <subcellularLocation>
        <location evidence="1">Cell surface</location>
    </subcellularLocation>
    <text evidence="1">Fractions of enolase are present in both the cytoplasm and on the cell surface.</text>
</comment>
<comment type="similarity">
    <text evidence="1">Belongs to the enolase family.</text>
</comment>
<gene>
    <name evidence="1" type="primary">eno</name>
    <name type="ordered locus">syc0886_c</name>
</gene>
<evidence type="ECO:0000255" key="1">
    <source>
        <dbReference type="HAMAP-Rule" id="MF_00318"/>
    </source>
</evidence>
<organism>
    <name type="scientific">Synechococcus sp. (strain ATCC 27144 / PCC 6301 / SAUG 1402/1)</name>
    <name type="common">Anacystis nidulans</name>
    <dbReference type="NCBI Taxonomy" id="269084"/>
    <lineage>
        <taxon>Bacteria</taxon>
        <taxon>Bacillati</taxon>
        <taxon>Cyanobacteriota</taxon>
        <taxon>Cyanophyceae</taxon>
        <taxon>Synechococcales</taxon>
        <taxon>Synechococcaceae</taxon>
        <taxon>Synechococcus</taxon>
    </lineage>
</organism>
<protein>
    <recommendedName>
        <fullName evidence="1">Enolase</fullName>
        <ecNumber evidence="1">4.2.1.11</ecNumber>
    </recommendedName>
    <alternativeName>
        <fullName evidence="1">2-phospho-D-glycerate hydro-lyase</fullName>
    </alternativeName>
    <alternativeName>
        <fullName evidence="1">2-phosphoglycerate dehydratase</fullName>
    </alternativeName>
</protein>
<dbReference type="EC" id="4.2.1.11" evidence="1"/>
<dbReference type="EMBL" id="AP008231">
    <property type="protein sequence ID" value="BAD79076.1"/>
    <property type="molecule type" value="Genomic_DNA"/>
</dbReference>
<dbReference type="RefSeq" id="WP_011243198.1">
    <property type="nucleotide sequence ID" value="NZ_CP085785.1"/>
</dbReference>
<dbReference type="SMR" id="Q5N3P4"/>
<dbReference type="GeneID" id="72429472"/>
<dbReference type="KEGG" id="syc:syc0886_c"/>
<dbReference type="eggNOG" id="COG0148">
    <property type="taxonomic scope" value="Bacteria"/>
</dbReference>
<dbReference type="UniPathway" id="UPA00109">
    <property type="reaction ID" value="UER00187"/>
</dbReference>
<dbReference type="EvolutionaryTrace" id="Q5N3P4"/>
<dbReference type="Proteomes" id="UP000001175">
    <property type="component" value="Chromosome"/>
</dbReference>
<dbReference type="GO" id="GO:0009986">
    <property type="term" value="C:cell surface"/>
    <property type="evidence" value="ECO:0007669"/>
    <property type="project" value="UniProtKB-SubCell"/>
</dbReference>
<dbReference type="GO" id="GO:0005576">
    <property type="term" value="C:extracellular region"/>
    <property type="evidence" value="ECO:0007669"/>
    <property type="project" value="UniProtKB-SubCell"/>
</dbReference>
<dbReference type="GO" id="GO:0000015">
    <property type="term" value="C:phosphopyruvate hydratase complex"/>
    <property type="evidence" value="ECO:0007669"/>
    <property type="project" value="InterPro"/>
</dbReference>
<dbReference type="GO" id="GO:0000287">
    <property type="term" value="F:magnesium ion binding"/>
    <property type="evidence" value="ECO:0007669"/>
    <property type="project" value="UniProtKB-UniRule"/>
</dbReference>
<dbReference type="GO" id="GO:0004634">
    <property type="term" value="F:phosphopyruvate hydratase activity"/>
    <property type="evidence" value="ECO:0007669"/>
    <property type="project" value="UniProtKB-UniRule"/>
</dbReference>
<dbReference type="GO" id="GO:0006096">
    <property type="term" value="P:glycolytic process"/>
    <property type="evidence" value="ECO:0007669"/>
    <property type="project" value="UniProtKB-UniRule"/>
</dbReference>
<dbReference type="CDD" id="cd03313">
    <property type="entry name" value="enolase"/>
    <property type="match status" value="1"/>
</dbReference>
<dbReference type="FunFam" id="3.20.20.120:FF:000001">
    <property type="entry name" value="Enolase"/>
    <property type="match status" value="1"/>
</dbReference>
<dbReference type="FunFam" id="3.30.390.10:FF:000001">
    <property type="entry name" value="Enolase"/>
    <property type="match status" value="1"/>
</dbReference>
<dbReference type="Gene3D" id="3.20.20.120">
    <property type="entry name" value="Enolase-like C-terminal domain"/>
    <property type="match status" value="1"/>
</dbReference>
<dbReference type="Gene3D" id="3.30.390.10">
    <property type="entry name" value="Enolase-like, N-terminal domain"/>
    <property type="match status" value="1"/>
</dbReference>
<dbReference type="HAMAP" id="MF_00318">
    <property type="entry name" value="Enolase"/>
    <property type="match status" value="1"/>
</dbReference>
<dbReference type="InterPro" id="IPR000941">
    <property type="entry name" value="Enolase"/>
</dbReference>
<dbReference type="InterPro" id="IPR036849">
    <property type="entry name" value="Enolase-like_C_sf"/>
</dbReference>
<dbReference type="InterPro" id="IPR029017">
    <property type="entry name" value="Enolase-like_N"/>
</dbReference>
<dbReference type="InterPro" id="IPR020810">
    <property type="entry name" value="Enolase_C"/>
</dbReference>
<dbReference type="InterPro" id="IPR020809">
    <property type="entry name" value="Enolase_CS"/>
</dbReference>
<dbReference type="InterPro" id="IPR020811">
    <property type="entry name" value="Enolase_N"/>
</dbReference>
<dbReference type="NCBIfam" id="TIGR01060">
    <property type="entry name" value="eno"/>
    <property type="match status" value="1"/>
</dbReference>
<dbReference type="PANTHER" id="PTHR11902">
    <property type="entry name" value="ENOLASE"/>
    <property type="match status" value="1"/>
</dbReference>
<dbReference type="PANTHER" id="PTHR11902:SF1">
    <property type="entry name" value="ENOLASE"/>
    <property type="match status" value="1"/>
</dbReference>
<dbReference type="Pfam" id="PF00113">
    <property type="entry name" value="Enolase_C"/>
    <property type="match status" value="1"/>
</dbReference>
<dbReference type="Pfam" id="PF03952">
    <property type="entry name" value="Enolase_N"/>
    <property type="match status" value="1"/>
</dbReference>
<dbReference type="PIRSF" id="PIRSF001400">
    <property type="entry name" value="Enolase"/>
    <property type="match status" value="1"/>
</dbReference>
<dbReference type="PRINTS" id="PR00148">
    <property type="entry name" value="ENOLASE"/>
</dbReference>
<dbReference type="SFLD" id="SFLDF00002">
    <property type="entry name" value="enolase"/>
    <property type="match status" value="1"/>
</dbReference>
<dbReference type="SFLD" id="SFLDG00178">
    <property type="entry name" value="enolase"/>
    <property type="match status" value="1"/>
</dbReference>
<dbReference type="SMART" id="SM01192">
    <property type="entry name" value="Enolase_C"/>
    <property type="match status" value="1"/>
</dbReference>
<dbReference type="SMART" id="SM01193">
    <property type="entry name" value="Enolase_N"/>
    <property type="match status" value="1"/>
</dbReference>
<dbReference type="SUPFAM" id="SSF51604">
    <property type="entry name" value="Enolase C-terminal domain-like"/>
    <property type="match status" value="1"/>
</dbReference>
<dbReference type="SUPFAM" id="SSF54826">
    <property type="entry name" value="Enolase N-terminal domain-like"/>
    <property type="match status" value="1"/>
</dbReference>
<dbReference type="PROSITE" id="PS00164">
    <property type="entry name" value="ENOLASE"/>
    <property type="match status" value="1"/>
</dbReference>
<sequence>MPDDYGTQIAEITAREILDSRGRPTVEAEVHLEDGSVGLAQVPSGASTGTFEAHELRDDDPSRYGGKGVQKAVENVSAIEDALIGLSALDQEGLDKAMIALDGTPNKKNLGANAILAVSLATAHAAATSLNLPLYRYLGGPLANVLPVPMMNVINGGAHADNNVDFQEFMIMPVGAPSFKEALRWGAEVFHALAKVLKDKGLATGVGDEGGFAPNLGSNKEALELLLTAIEAAGYKPGEQVALAMDVASSEFYKNGLYTCDGVSHEPAGMIGILADLVSQYPIVSIEDGLQEDDWSNWKTLTQQLGSTVQLVGDDLFVTNPDRLQSGIEQGVGNAVLIKLNQIGTLTETLRTIDLATRSGYRSVISHRSGETEDTTIADLAVATRAGQIKTGSLSRSERIAKYNRLLRIEAALGENALYAGAIGLGPKGR</sequence>
<keyword id="KW-0963">Cytoplasm</keyword>
<keyword id="KW-0324">Glycolysis</keyword>
<keyword id="KW-0456">Lyase</keyword>
<keyword id="KW-0460">Magnesium</keyword>
<keyword id="KW-0479">Metal-binding</keyword>
<keyword id="KW-0964">Secreted</keyword>